<organism>
    <name type="scientific">Aliivibrio fischeri (strain ATCC 700601 / ES114)</name>
    <name type="common">Vibrio fischeri</name>
    <dbReference type="NCBI Taxonomy" id="312309"/>
    <lineage>
        <taxon>Bacteria</taxon>
        <taxon>Pseudomonadati</taxon>
        <taxon>Pseudomonadota</taxon>
        <taxon>Gammaproteobacteria</taxon>
        <taxon>Vibrionales</taxon>
        <taxon>Vibrionaceae</taxon>
        <taxon>Aliivibrio</taxon>
    </lineage>
</organism>
<dbReference type="EC" id="2.8.1.-"/>
<dbReference type="EMBL" id="CP000020">
    <property type="protein sequence ID" value="AAW84723.1"/>
    <property type="molecule type" value="Genomic_DNA"/>
</dbReference>
<dbReference type="RefSeq" id="WP_011261073.1">
    <property type="nucleotide sequence ID" value="NC_006840.2"/>
</dbReference>
<dbReference type="RefSeq" id="YP_203611.1">
    <property type="nucleotide sequence ID" value="NC_006840.2"/>
</dbReference>
<dbReference type="SMR" id="Q5E8C3"/>
<dbReference type="STRING" id="312309.VF_0228"/>
<dbReference type="EnsemblBacteria" id="AAW84723">
    <property type="protein sequence ID" value="AAW84723"/>
    <property type="gene ID" value="VF_0228"/>
</dbReference>
<dbReference type="GeneID" id="54162850"/>
<dbReference type="KEGG" id="vfi:VF_0228"/>
<dbReference type="PATRIC" id="fig|312309.11.peg.224"/>
<dbReference type="eggNOG" id="COG1553">
    <property type="taxonomic scope" value="Bacteria"/>
</dbReference>
<dbReference type="HOGENOM" id="CLU_132095_0_0_6"/>
<dbReference type="OrthoDB" id="9787483at2"/>
<dbReference type="Proteomes" id="UP000000537">
    <property type="component" value="Chromosome I"/>
</dbReference>
<dbReference type="GO" id="GO:1990228">
    <property type="term" value="C:sulfurtransferase complex"/>
    <property type="evidence" value="ECO:0007669"/>
    <property type="project" value="TreeGrafter"/>
</dbReference>
<dbReference type="GO" id="GO:0097163">
    <property type="term" value="F:sulfur carrier activity"/>
    <property type="evidence" value="ECO:0007669"/>
    <property type="project" value="TreeGrafter"/>
</dbReference>
<dbReference type="GO" id="GO:0016783">
    <property type="term" value="F:sulfurtransferase activity"/>
    <property type="evidence" value="ECO:0007669"/>
    <property type="project" value="InterPro"/>
</dbReference>
<dbReference type="GO" id="GO:0002143">
    <property type="term" value="P:tRNA wobble position uridine thiolation"/>
    <property type="evidence" value="ECO:0007669"/>
    <property type="project" value="TreeGrafter"/>
</dbReference>
<dbReference type="FunFam" id="3.40.1260.10:FF:000001">
    <property type="entry name" value="Sulfurtransferase TusD"/>
    <property type="match status" value="1"/>
</dbReference>
<dbReference type="Gene3D" id="3.40.1260.10">
    <property type="entry name" value="DsrEFH-like"/>
    <property type="match status" value="1"/>
</dbReference>
<dbReference type="InterPro" id="IPR027396">
    <property type="entry name" value="DsrEFH-like"/>
</dbReference>
<dbReference type="InterPro" id="IPR003787">
    <property type="entry name" value="Sulphur_relay_DsrE/F-like"/>
</dbReference>
<dbReference type="InterPro" id="IPR017463">
    <property type="entry name" value="Sulphur_relay_TusD/DsrE"/>
</dbReference>
<dbReference type="NCBIfam" id="NF001237">
    <property type="entry name" value="PRK00207.1"/>
    <property type="match status" value="1"/>
</dbReference>
<dbReference type="NCBIfam" id="TIGR03012">
    <property type="entry name" value="sulf_tusD_dsrE"/>
    <property type="match status" value="1"/>
</dbReference>
<dbReference type="PANTHER" id="PTHR34874">
    <property type="entry name" value="PROTEIN YCHN"/>
    <property type="match status" value="1"/>
</dbReference>
<dbReference type="PANTHER" id="PTHR34874:SF3">
    <property type="entry name" value="SULFURTRANSFERASE TUSD"/>
    <property type="match status" value="1"/>
</dbReference>
<dbReference type="Pfam" id="PF02635">
    <property type="entry name" value="DsrE"/>
    <property type="match status" value="1"/>
</dbReference>
<dbReference type="SUPFAM" id="SSF75169">
    <property type="entry name" value="DsrEFH-like"/>
    <property type="match status" value="1"/>
</dbReference>
<feature type="chain" id="PRO_0000214737" description="Sulfurtransferase TusD homolog">
    <location>
        <begin position="1"/>
        <end position="130"/>
    </location>
</feature>
<feature type="active site" description="Cysteine persulfide intermediate" evidence="1">
    <location>
        <position position="80"/>
    </location>
</feature>
<accession>Q5E8C3</accession>
<gene>
    <name type="primary">tusD</name>
    <name type="ordered locus">VF_0228</name>
</gene>
<comment type="function">
    <text evidence="1">Could be part of a sulfur-relay system.</text>
</comment>
<comment type="subcellular location">
    <subcellularLocation>
        <location evidence="1">Cytoplasm</location>
    </subcellularLocation>
</comment>
<comment type="similarity">
    <text evidence="2">Belongs to the DsrE/TusD family.</text>
</comment>
<evidence type="ECO:0000250" key="1"/>
<evidence type="ECO:0000305" key="2"/>
<keyword id="KW-0963">Cytoplasm</keyword>
<keyword id="KW-1185">Reference proteome</keyword>
<keyword id="KW-0808">Transferase</keyword>
<sequence length="130" mass="14182">MSLVYGLVVNGPAYGSQASRKAFQFAEAVLAQGHSIKKVFFYQEGVLNASSLILPANDEVDITKQWQELALRHDIELETCVAAALRRGVIGEEEASQHQLKQHNLAVGFQQAGLGGLATALLKFDRVVQF</sequence>
<protein>
    <recommendedName>
        <fullName>Sulfurtransferase TusD homolog</fullName>
        <ecNumber>2.8.1.-</ecNumber>
    </recommendedName>
</protein>
<proteinExistence type="inferred from homology"/>
<reference key="1">
    <citation type="journal article" date="2005" name="Proc. Natl. Acad. Sci. U.S.A.">
        <title>Complete genome sequence of Vibrio fischeri: a symbiotic bacterium with pathogenic congeners.</title>
        <authorList>
            <person name="Ruby E.G."/>
            <person name="Urbanowski M."/>
            <person name="Campbell J."/>
            <person name="Dunn A."/>
            <person name="Faini M."/>
            <person name="Gunsalus R."/>
            <person name="Lostroh P."/>
            <person name="Lupp C."/>
            <person name="McCann J."/>
            <person name="Millikan D."/>
            <person name="Schaefer A."/>
            <person name="Stabb E."/>
            <person name="Stevens A."/>
            <person name="Visick K."/>
            <person name="Whistler C."/>
            <person name="Greenberg E.P."/>
        </authorList>
    </citation>
    <scope>NUCLEOTIDE SEQUENCE [LARGE SCALE GENOMIC DNA]</scope>
    <source>
        <strain>ATCC 700601 / ES114</strain>
    </source>
</reference>
<name>TUSD_ALIF1</name>